<reference evidence="14 15" key="1">
    <citation type="journal article" date="2003" name="Genome Res.">
        <title>The secreted protein discovery initiative (SPDI), a large-scale effort to identify novel human secreted and transmembrane proteins: a bioinformatics assessment.</title>
        <authorList>
            <person name="Clark H.F."/>
            <person name="Gurney A.L."/>
            <person name="Abaya E."/>
            <person name="Baker K."/>
            <person name="Baldwin D.T."/>
            <person name="Brush J."/>
            <person name="Chen J."/>
            <person name="Chow B."/>
            <person name="Chui C."/>
            <person name="Crowley C."/>
            <person name="Currell B."/>
            <person name="Deuel B."/>
            <person name="Dowd P."/>
            <person name="Eaton D."/>
            <person name="Foster J.S."/>
            <person name="Grimaldi C."/>
            <person name="Gu Q."/>
            <person name="Hass P.E."/>
            <person name="Heldens S."/>
            <person name="Huang A."/>
            <person name="Kim H.S."/>
            <person name="Klimowski L."/>
            <person name="Jin Y."/>
            <person name="Johnson S."/>
            <person name="Lee J."/>
            <person name="Lewis L."/>
            <person name="Liao D."/>
            <person name="Mark M.R."/>
            <person name="Robbie E."/>
            <person name="Sanchez C."/>
            <person name="Schoenfeld J."/>
            <person name="Seshagiri S."/>
            <person name="Simmons L."/>
            <person name="Singh J."/>
            <person name="Smith V."/>
            <person name="Stinson J."/>
            <person name="Vagts A."/>
            <person name="Vandlen R.L."/>
            <person name="Watanabe C."/>
            <person name="Wieand D."/>
            <person name="Woods K."/>
            <person name="Xie M.-H."/>
            <person name="Yansura D.G."/>
            <person name="Yi S."/>
            <person name="Yu G."/>
            <person name="Yuan J."/>
            <person name="Zhang M."/>
            <person name="Zhang Z."/>
            <person name="Goddard A.D."/>
            <person name="Wood W.I."/>
            <person name="Godowski P.J."/>
            <person name="Gray A.M."/>
        </authorList>
    </citation>
    <scope>NUCLEOTIDE SEQUENCE [LARGE SCALE MRNA] (ISOFORM 2)</scope>
    <scope>VARIANT GLY-987</scope>
</reference>
<reference key="2">
    <citation type="journal article" date="2004" name="Nature">
        <title>DNA sequence and analysis of human chromosome 9.</title>
        <authorList>
            <person name="Humphray S.J."/>
            <person name="Oliver K."/>
            <person name="Hunt A.R."/>
            <person name="Plumb R.W."/>
            <person name="Loveland J.E."/>
            <person name="Howe K.L."/>
            <person name="Andrews T.D."/>
            <person name="Searle S."/>
            <person name="Hunt S.E."/>
            <person name="Scott C.E."/>
            <person name="Jones M.C."/>
            <person name="Ainscough R."/>
            <person name="Almeida J.P."/>
            <person name="Ambrose K.D."/>
            <person name="Ashwell R.I.S."/>
            <person name="Babbage A.K."/>
            <person name="Babbage S."/>
            <person name="Bagguley C.L."/>
            <person name="Bailey J."/>
            <person name="Banerjee R."/>
            <person name="Barker D.J."/>
            <person name="Barlow K.F."/>
            <person name="Bates K."/>
            <person name="Beasley H."/>
            <person name="Beasley O."/>
            <person name="Bird C.P."/>
            <person name="Bray-Allen S."/>
            <person name="Brown A.J."/>
            <person name="Brown J.Y."/>
            <person name="Burford D."/>
            <person name="Burrill W."/>
            <person name="Burton J."/>
            <person name="Carder C."/>
            <person name="Carter N.P."/>
            <person name="Chapman J.C."/>
            <person name="Chen Y."/>
            <person name="Clarke G."/>
            <person name="Clark S.Y."/>
            <person name="Clee C.M."/>
            <person name="Clegg S."/>
            <person name="Collier R.E."/>
            <person name="Corby N."/>
            <person name="Crosier M."/>
            <person name="Cummings A.T."/>
            <person name="Davies J."/>
            <person name="Dhami P."/>
            <person name="Dunn M."/>
            <person name="Dutta I."/>
            <person name="Dyer L.W."/>
            <person name="Earthrowl M.E."/>
            <person name="Faulkner L."/>
            <person name="Fleming C.J."/>
            <person name="Frankish A."/>
            <person name="Frankland J.A."/>
            <person name="French L."/>
            <person name="Fricker D.G."/>
            <person name="Garner P."/>
            <person name="Garnett J."/>
            <person name="Ghori J."/>
            <person name="Gilbert J.G.R."/>
            <person name="Glison C."/>
            <person name="Grafham D.V."/>
            <person name="Gribble S."/>
            <person name="Griffiths C."/>
            <person name="Griffiths-Jones S."/>
            <person name="Grocock R."/>
            <person name="Guy J."/>
            <person name="Hall R.E."/>
            <person name="Hammond S."/>
            <person name="Harley J.L."/>
            <person name="Harrison E.S.I."/>
            <person name="Hart E.A."/>
            <person name="Heath P.D."/>
            <person name="Henderson C.D."/>
            <person name="Hopkins B.L."/>
            <person name="Howard P.J."/>
            <person name="Howden P.J."/>
            <person name="Huckle E."/>
            <person name="Johnson C."/>
            <person name="Johnson D."/>
            <person name="Joy A.A."/>
            <person name="Kay M."/>
            <person name="Keenan S."/>
            <person name="Kershaw J.K."/>
            <person name="Kimberley A.M."/>
            <person name="King A."/>
            <person name="Knights A."/>
            <person name="Laird G.K."/>
            <person name="Langford C."/>
            <person name="Lawlor S."/>
            <person name="Leongamornlert D.A."/>
            <person name="Leversha M."/>
            <person name="Lloyd C."/>
            <person name="Lloyd D.M."/>
            <person name="Lovell J."/>
            <person name="Martin S."/>
            <person name="Mashreghi-Mohammadi M."/>
            <person name="Matthews L."/>
            <person name="McLaren S."/>
            <person name="McLay K.E."/>
            <person name="McMurray A."/>
            <person name="Milne S."/>
            <person name="Nickerson T."/>
            <person name="Nisbett J."/>
            <person name="Nordsiek G."/>
            <person name="Pearce A.V."/>
            <person name="Peck A.I."/>
            <person name="Porter K.M."/>
            <person name="Pandian R."/>
            <person name="Pelan S."/>
            <person name="Phillimore B."/>
            <person name="Povey S."/>
            <person name="Ramsey Y."/>
            <person name="Rand V."/>
            <person name="Scharfe M."/>
            <person name="Sehra H.K."/>
            <person name="Shownkeen R."/>
            <person name="Sims S.K."/>
            <person name="Skuce C.D."/>
            <person name="Smith M."/>
            <person name="Steward C.A."/>
            <person name="Swarbreck D."/>
            <person name="Sycamore N."/>
            <person name="Tester J."/>
            <person name="Thorpe A."/>
            <person name="Tracey A."/>
            <person name="Tromans A."/>
            <person name="Thomas D.W."/>
            <person name="Wall M."/>
            <person name="Wallis J.M."/>
            <person name="West A.P."/>
            <person name="Whitehead S.L."/>
            <person name="Willey D.L."/>
            <person name="Williams S.A."/>
            <person name="Wilming L."/>
            <person name="Wray P.W."/>
            <person name="Young L."/>
            <person name="Ashurst J.L."/>
            <person name="Coulson A."/>
            <person name="Blocker H."/>
            <person name="Durbin R.M."/>
            <person name="Sulston J.E."/>
            <person name="Hubbard T."/>
            <person name="Jackson M.J."/>
            <person name="Bentley D.R."/>
            <person name="Beck S."/>
            <person name="Rogers J."/>
            <person name="Dunham I."/>
        </authorList>
    </citation>
    <scope>NUCLEOTIDE SEQUENCE [LARGE SCALE GENOMIC DNA]</scope>
</reference>
<reference key="3">
    <citation type="submission" date="2005-07" db="EMBL/GenBank/DDBJ databases">
        <authorList>
            <person name="Mural R.J."/>
            <person name="Istrail S."/>
            <person name="Sutton G.G."/>
            <person name="Florea L."/>
            <person name="Halpern A.L."/>
            <person name="Mobarry C.M."/>
            <person name="Lippert R."/>
            <person name="Walenz B."/>
            <person name="Shatkay H."/>
            <person name="Dew I."/>
            <person name="Miller J.R."/>
            <person name="Flanigan M.J."/>
            <person name="Edwards N.J."/>
            <person name="Bolanos R."/>
            <person name="Fasulo D."/>
            <person name="Halldorsson B.V."/>
            <person name="Hannenhalli S."/>
            <person name="Turner R."/>
            <person name="Yooseph S."/>
            <person name="Lu F."/>
            <person name="Nusskern D.R."/>
            <person name="Shue B.C."/>
            <person name="Zheng X.H."/>
            <person name="Zhong F."/>
            <person name="Delcher A.L."/>
            <person name="Huson D.H."/>
            <person name="Kravitz S.A."/>
            <person name="Mouchard L."/>
            <person name="Reinert K."/>
            <person name="Remington K.A."/>
            <person name="Clark A.G."/>
            <person name="Waterman M.S."/>
            <person name="Eichler E.E."/>
            <person name="Adams M.D."/>
            <person name="Hunkapiller M.W."/>
            <person name="Myers E.W."/>
            <person name="Venter J.C."/>
        </authorList>
    </citation>
    <scope>NUCLEOTIDE SEQUENCE [LARGE SCALE GENOMIC DNA]</scope>
</reference>
<reference key="4">
    <citation type="journal article" date="2007" name="BMC Genomics">
        <title>The full-ORF clone resource of the German cDNA consortium.</title>
        <authorList>
            <person name="Bechtel S."/>
            <person name="Rosenfelder H."/>
            <person name="Duda A."/>
            <person name="Schmidt C.P."/>
            <person name="Ernst U."/>
            <person name="Wellenreuther R."/>
            <person name="Mehrle A."/>
            <person name="Schuster C."/>
            <person name="Bahr A."/>
            <person name="Bloecker H."/>
            <person name="Heubner D."/>
            <person name="Hoerlein A."/>
            <person name="Michel G."/>
            <person name="Wedler H."/>
            <person name="Koehrer K."/>
            <person name="Ottenwaelder B."/>
            <person name="Poustka A."/>
            <person name="Wiemann S."/>
            <person name="Schupp I."/>
        </authorList>
    </citation>
    <scope>NUCLEOTIDE SEQUENCE [LARGE SCALE MRNA] OF 725-1216 (ISOFORM 3)</scope>
    <scope>VARIANT GLY-987</scope>
    <source>
        <tissue>Testis</tissue>
    </source>
</reference>
<reference key="5">
    <citation type="journal article" date="2006" name="Science">
        <title>The consensus coding sequences of human breast and colorectal cancers.</title>
        <authorList>
            <person name="Sjoeblom T."/>
            <person name="Jones S."/>
            <person name="Wood L.D."/>
            <person name="Parsons D.W."/>
            <person name="Lin J."/>
            <person name="Barber T.D."/>
            <person name="Mandelker D."/>
            <person name="Leary R.J."/>
            <person name="Ptak J."/>
            <person name="Silliman N."/>
            <person name="Szabo S."/>
            <person name="Buckhaults P."/>
            <person name="Farrell C."/>
            <person name="Meeh P."/>
            <person name="Markowitz S.D."/>
            <person name="Willis J."/>
            <person name="Dawson D."/>
            <person name="Willson J.K.V."/>
            <person name="Gazdar A.F."/>
            <person name="Hartigan J."/>
            <person name="Wu L."/>
            <person name="Liu C."/>
            <person name="Parmigiani G."/>
            <person name="Park B.H."/>
            <person name="Bachman K.E."/>
            <person name="Papadopoulos N."/>
            <person name="Vogelstein B."/>
            <person name="Kinzler K.W."/>
            <person name="Velculescu V.E."/>
        </authorList>
    </citation>
    <scope>VARIANTS [LARGE SCALE ANALYSIS] THR-244 AND TRP-1174</scope>
</reference>
<dbReference type="EMBL" id="AY358419">
    <property type="protein sequence ID" value="AAQ88785.1"/>
    <property type="molecule type" value="mRNA"/>
</dbReference>
<dbReference type="EMBL" id="AL355987">
    <property type="status" value="NOT_ANNOTATED_CDS"/>
    <property type="molecule type" value="Genomic_DNA"/>
</dbReference>
<dbReference type="EMBL" id="CH471090">
    <property type="protein sequence ID" value="EAW88294.1"/>
    <property type="molecule type" value="Genomic_DNA"/>
</dbReference>
<dbReference type="EMBL" id="AL834531">
    <property type="protein sequence ID" value="CAD39187.1"/>
    <property type="molecule type" value="mRNA"/>
</dbReference>
<dbReference type="CCDS" id="CCDS7010.1">
    <molecule id="Q6UXC1-2"/>
</dbReference>
<dbReference type="RefSeq" id="NP_996803.2">
    <molecule id="Q6UXC1-2"/>
    <property type="nucleotide sequence ID" value="NM_206920.3"/>
</dbReference>
<dbReference type="SMR" id="Q6UXC1"/>
<dbReference type="BioGRID" id="127643">
    <property type="interactions" value="157"/>
</dbReference>
<dbReference type="FunCoup" id="Q6UXC1">
    <property type="interactions" value="295"/>
</dbReference>
<dbReference type="IntAct" id="Q6UXC1">
    <property type="interactions" value="18"/>
</dbReference>
<dbReference type="STRING" id="9606.ENSP00000319388"/>
<dbReference type="GlyCosmos" id="Q6UXC1">
    <property type="glycosylation" value="6 sites, No reported glycans"/>
</dbReference>
<dbReference type="GlyGen" id="Q6UXC1">
    <property type="glycosylation" value="9 sites"/>
</dbReference>
<dbReference type="iPTMnet" id="Q6UXC1"/>
<dbReference type="PhosphoSitePlus" id="Q6UXC1"/>
<dbReference type="BioMuta" id="MAMDC4"/>
<dbReference type="DMDM" id="147742916"/>
<dbReference type="MassIVE" id="Q6UXC1"/>
<dbReference type="PaxDb" id="9606-ENSP00000319388"/>
<dbReference type="PeptideAtlas" id="Q6UXC1"/>
<dbReference type="ProteomicsDB" id="67588">
    <molecule id="Q6UXC1-1"/>
</dbReference>
<dbReference type="ProteomicsDB" id="67589">
    <molecule id="Q6UXC1-2"/>
</dbReference>
<dbReference type="ProteomicsDB" id="67590">
    <molecule id="Q6UXC1-3"/>
</dbReference>
<dbReference type="Antibodypedia" id="64043">
    <property type="antibodies" value="9 antibodies from 7 providers"/>
</dbReference>
<dbReference type="DNASU" id="158056"/>
<dbReference type="Ensembl" id="ENST00000317446.7">
    <molecule id="Q6UXC1-2"/>
    <property type="protein sequence ID" value="ENSP00000319388.2"/>
    <property type="gene ID" value="ENSG00000177943.14"/>
</dbReference>
<dbReference type="Ensembl" id="ENST00000445819.5">
    <molecule id="Q6UXC1-1"/>
    <property type="protein sequence ID" value="ENSP00000411339.1"/>
    <property type="gene ID" value="ENSG00000177943.14"/>
</dbReference>
<dbReference type="GeneID" id="158056"/>
<dbReference type="KEGG" id="hsa:158056"/>
<dbReference type="MANE-Select" id="ENST00000317446.7">
    <molecule id="Q6UXC1-2"/>
    <property type="protein sequence ID" value="ENSP00000319388.2"/>
    <property type="RefSeq nucleotide sequence ID" value="NM_206920.3"/>
    <property type="RefSeq protein sequence ID" value="NP_996803.2"/>
</dbReference>
<dbReference type="UCSC" id="uc004cjs.4">
    <molecule id="Q6UXC1-1"/>
    <property type="organism name" value="human"/>
</dbReference>
<dbReference type="AGR" id="HGNC:24083"/>
<dbReference type="CTD" id="158056"/>
<dbReference type="DisGeNET" id="158056"/>
<dbReference type="GeneCards" id="MAMDC4"/>
<dbReference type="HGNC" id="HGNC:24083">
    <property type="gene designation" value="MAMDC4"/>
</dbReference>
<dbReference type="HPA" id="ENSG00000177943">
    <property type="expression patterns" value="Tissue enhanced (brain, liver)"/>
</dbReference>
<dbReference type="neXtProt" id="NX_Q6UXC1"/>
<dbReference type="OpenTargets" id="ENSG00000177943"/>
<dbReference type="PharmGKB" id="PA142671487"/>
<dbReference type="VEuPathDB" id="HostDB:ENSG00000177943"/>
<dbReference type="eggNOG" id="KOG1095">
    <property type="taxonomic scope" value="Eukaryota"/>
</dbReference>
<dbReference type="GeneTree" id="ENSGT00940000162046"/>
<dbReference type="HOGENOM" id="CLU_008233_0_0_1"/>
<dbReference type="InParanoid" id="Q6UXC1"/>
<dbReference type="OMA" id="DLCGWYQ"/>
<dbReference type="OrthoDB" id="8847287at2759"/>
<dbReference type="PAN-GO" id="Q6UXC1">
    <property type="GO annotations" value="1 GO annotation based on evolutionary models"/>
</dbReference>
<dbReference type="PhylomeDB" id="Q6UXC1"/>
<dbReference type="TreeFam" id="TF330345"/>
<dbReference type="PathwayCommons" id="Q6UXC1"/>
<dbReference type="SignaLink" id="Q6UXC1"/>
<dbReference type="BioGRID-ORCS" id="158056">
    <property type="hits" value="19 hits in 1154 CRISPR screens"/>
</dbReference>
<dbReference type="GenomeRNAi" id="158056"/>
<dbReference type="Pharos" id="Q6UXC1">
    <property type="development level" value="Tdark"/>
</dbReference>
<dbReference type="PRO" id="PR:Q6UXC1"/>
<dbReference type="Proteomes" id="UP000005640">
    <property type="component" value="Chromosome 9"/>
</dbReference>
<dbReference type="RNAct" id="Q6UXC1">
    <property type="molecule type" value="protein"/>
</dbReference>
<dbReference type="Bgee" id="ENSG00000177943">
    <property type="expression patterns" value="Expressed in right hemisphere of cerebellum and 105 other cell types or tissues"/>
</dbReference>
<dbReference type="ExpressionAtlas" id="Q6UXC1">
    <property type="expression patterns" value="baseline and differential"/>
</dbReference>
<dbReference type="GO" id="GO:0016020">
    <property type="term" value="C:membrane"/>
    <property type="evidence" value="ECO:0007669"/>
    <property type="project" value="UniProtKB-SubCell"/>
</dbReference>
<dbReference type="GO" id="GO:0015031">
    <property type="term" value="P:protein transport"/>
    <property type="evidence" value="ECO:0007669"/>
    <property type="project" value="UniProtKB-KW"/>
</dbReference>
<dbReference type="CDD" id="cd00112">
    <property type="entry name" value="LDLa"/>
    <property type="match status" value="2"/>
</dbReference>
<dbReference type="CDD" id="cd06263">
    <property type="entry name" value="MAM"/>
    <property type="match status" value="6"/>
</dbReference>
<dbReference type="Gene3D" id="2.60.120.200">
    <property type="match status" value="6"/>
</dbReference>
<dbReference type="Gene3D" id="4.10.400.10">
    <property type="entry name" value="Low-density Lipoprotein Receptor"/>
    <property type="match status" value="2"/>
</dbReference>
<dbReference type="InterPro" id="IPR013320">
    <property type="entry name" value="ConA-like_dom_sf"/>
</dbReference>
<dbReference type="InterPro" id="IPR036055">
    <property type="entry name" value="LDL_receptor-like_sf"/>
</dbReference>
<dbReference type="InterPro" id="IPR023415">
    <property type="entry name" value="LDLR_class-A_CS"/>
</dbReference>
<dbReference type="InterPro" id="IPR002172">
    <property type="entry name" value="LDrepeatLR_classA_rpt"/>
</dbReference>
<dbReference type="InterPro" id="IPR000998">
    <property type="entry name" value="MAM_dom"/>
</dbReference>
<dbReference type="InterPro" id="IPR051560">
    <property type="entry name" value="MAM_domain-containing"/>
</dbReference>
<dbReference type="PANTHER" id="PTHR23282:SF129">
    <property type="entry name" value="APICAL ENDOSOMAL GLYCOPROTEIN"/>
    <property type="match status" value="1"/>
</dbReference>
<dbReference type="PANTHER" id="PTHR23282">
    <property type="entry name" value="APICAL ENDOSOMAL GLYCOPROTEIN PRECURSOR"/>
    <property type="match status" value="1"/>
</dbReference>
<dbReference type="Pfam" id="PF00057">
    <property type="entry name" value="Ldl_recept_a"/>
    <property type="match status" value="1"/>
</dbReference>
<dbReference type="Pfam" id="PF00629">
    <property type="entry name" value="MAM"/>
    <property type="match status" value="6"/>
</dbReference>
<dbReference type="PRINTS" id="PR00261">
    <property type="entry name" value="LDLRECEPTOR"/>
</dbReference>
<dbReference type="SMART" id="SM00192">
    <property type="entry name" value="LDLa"/>
    <property type="match status" value="3"/>
</dbReference>
<dbReference type="SMART" id="SM00137">
    <property type="entry name" value="MAM"/>
    <property type="match status" value="6"/>
</dbReference>
<dbReference type="SUPFAM" id="SSF49899">
    <property type="entry name" value="Concanavalin A-like lectins/glucanases"/>
    <property type="match status" value="6"/>
</dbReference>
<dbReference type="SUPFAM" id="SSF57424">
    <property type="entry name" value="LDL receptor-like module"/>
    <property type="match status" value="1"/>
</dbReference>
<dbReference type="PROSITE" id="PS01209">
    <property type="entry name" value="LDLRA_1"/>
    <property type="match status" value="2"/>
</dbReference>
<dbReference type="PROSITE" id="PS50068">
    <property type="entry name" value="LDLRA_2"/>
    <property type="match status" value="2"/>
</dbReference>
<dbReference type="PROSITE" id="PS50060">
    <property type="entry name" value="MAM_2"/>
    <property type="match status" value="6"/>
</dbReference>
<protein>
    <recommendedName>
        <fullName>Apical endosomal glycoprotein</fullName>
    </recommendedName>
    <alternativeName>
        <fullName>MAM domain-containing protein 4</fullName>
    </alternativeName>
</protein>
<name>AEGP_HUMAN</name>
<proteinExistence type="evidence at protein level"/>
<sequence length="1216" mass="131499">MPLSSHLLPALVLFLAGSSGWAWVPNHCRSPGQAVCNFVCDCRDCSDEAQCGYHGASPTLGAPFACDFEQDPCGWRDISTSGYSWLRDRAGAALEGPGPHSDHTLGTDLGWYMAVGTHRGKEASTAALRSPTLREAASSCKLRLWYHAASGDVAELRVELTHGAETLTLWQSTGPWGPGWQELAVTTGRIRGDFRVTFSATRNATHRGAVALDDLEFWDCGLPTPQANCPPGHHHCQNKVCVEPQQLCDGEDNCGDLSDENPLTCGRHIATDFETGLGPWNRSEGWSRNHRAGGPERPSWPRRDHSRNSAQGSFLVSVAEPGTPAILSSPEFQASGTSNCSLVFYQYLSGSEAGCLQLFLQTLGPGAPRAPVLLRRRRGELGTAWVRDRVDIQSAYPFQILLAGQTGPGGVVGLDDLILSDHCRPVSEVSTLQPLPPGPRAPAPQPLPPSSRLQDSCKQGHLACGDLCVPPEQLCDFEEQCAGGEDEQACGTTDFESPEAGGWEDASVGRLQWRRVSAQESQGSSAAAAGHFLSLQRAWGQLGAEARVLTPLLGPSGPSCELHLAYYLQSQPRGFLALVVVDNGSRELAWQALSSSAGIWKVDKVLLGARRRPFRLEFVGLVDLDGPDQQGAGVDNVTLRDCSPTVTTERDREVSCNFERDTCSWYPGHLSDTHWRWVESRGPDHDHTTGQGHFVLLDPTDPLAWGHSAHLLSRPQVPAAPTECLSFWYHLHGPQIGTLRLAMRREGEETHLWSRSGTQGNRWHEAWATLSHQPGSHAQYQLLFEGLRDGYHGTMALDDVAVRPGPCWAPNYCSFEDSDCGFSPGGQGLWRRQANASGHAAWGPPTDHTTETAQGHYMVVDTSPDALPRGQTASLTSKEHRPLAQPACLTFWYHGSLRSPGTLRVYLEERGRHQVLSLSAHGGLAWRLGSMDVQAERAWRVVFEAVAAGVAHSYVALDDLLLQDGPCPQPGSCDFESGLCGWSHLAWPGLGGYSWDWGGGATPSRYPQPPVDHTLGTEAGHFAFFETGVLGPGGRAAWLRSEPLPATPASCLRFWYHMGFPEHFYKGELKVLLHSAQGQLAVWGAGGHRRHQWLEAQVEVASAKEFQIVFEATLGGQPALGPIALDDVEYLAGQHCQQPAPSPGNTAAPGSVPAVVGSALLLLMLLVLLGLGGRRWLQKKGSCPFQSNTEATAPGFDNILFNADGVTLPASVTSDP</sequence>
<gene>
    <name evidence="16" type="primary">MAMDC4</name>
    <name type="synonym">AEGP</name>
    <name type="ORF">UNQ3001/PRO9742</name>
</gene>
<feature type="signal peptide" evidence="4">
    <location>
        <begin position="1"/>
        <end position="22"/>
    </location>
</feature>
<feature type="chain" id="PRO_0000286578" description="Apical endosomal glycoprotein">
    <location>
        <begin position="23"/>
        <end position="1216"/>
    </location>
</feature>
<feature type="topological domain" description="Extracellular" evidence="4">
    <location>
        <begin position="23"/>
        <end position="1151"/>
    </location>
</feature>
<feature type="transmembrane region" description="Helical" evidence="4">
    <location>
        <begin position="1152"/>
        <end position="1172"/>
    </location>
</feature>
<feature type="topological domain" description="Cytoplasmic" evidence="4">
    <location>
        <begin position="1173"/>
        <end position="1216"/>
    </location>
</feature>
<feature type="domain" description="LDL-receptor class A 1; truncated" evidence="5">
    <location>
        <begin position="26"/>
        <end position="53"/>
    </location>
</feature>
<feature type="domain" description="MAM 1" evidence="6">
    <location>
        <begin position="64"/>
        <end position="222"/>
    </location>
</feature>
<feature type="domain" description="LDL-receptor class A 2" evidence="5">
    <location>
        <begin position="228"/>
        <end position="266"/>
    </location>
</feature>
<feature type="domain" description="MAM 2" evidence="6">
    <location>
        <begin position="269"/>
        <end position="425"/>
    </location>
</feature>
<feature type="domain" description="LDL-receptor class A 3" evidence="5">
    <location>
        <begin position="456"/>
        <end position="491"/>
    </location>
</feature>
<feature type="domain" description="MAM 3" evidence="6">
    <location>
        <begin position="491"/>
        <end position="644"/>
    </location>
</feature>
<feature type="domain" description="MAM 4" evidence="6">
    <location>
        <begin position="654"/>
        <end position="809"/>
    </location>
</feature>
<feature type="domain" description="MAM 5" evidence="6">
    <location>
        <begin position="811"/>
        <end position="969"/>
    </location>
</feature>
<feature type="domain" description="MAM 6" evidence="6">
    <location>
        <begin position="971"/>
        <end position="1138"/>
    </location>
</feature>
<feature type="region of interest" description="Disordered" evidence="7">
    <location>
        <begin position="280"/>
        <end position="307"/>
    </location>
</feature>
<feature type="region of interest" description="Disordered" evidence="7">
    <location>
        <begin position="429"/>
        <end position="455"/>
    </location>
</feature>
<feature type="compositionally biased region" description="Pro residues" evidence="7">
    <location>
        <begin position="434"/>
        <end position="449"/>
    </location>
</feature>
<feature type="glycosylation site" description="N-linked (GlcNAc...) asparagine" evidence="4">
    <location>
        <position position="203"/>
    </location>
</feature>
<feature type="glycosylation site" description="N-linked (GlcNAc...) asparagine" evidence="4">
    <location>
        <position position="281"/>
    </location>
</feature>
<feature type="glycosylation site" description="N-linked (GlcNAc...) asparagine" evidence="4">
    <location>
        <position position="339"/>
    </location>
</feature>
<feature type="glycosylation site" description="N-linked (GlcNAc...) asparagine" evidence="4">
    <location>
        <position position="583"/>
    </location>
</feature>
<feature type="glycosylation site" description="N-linked (GlcNAc...) asparagine" evidence="4">
    <location>
        <position position="636"/>
    </location>
</feature>
<feature type="glycosylation site" description="N-linked (GlcNAc...) asparagine" evidence="4">
    <location>
        <position position="835"/>
    </location>
</feature>
<feature type="disulfide bond" evidence="2 5">
    <location>
        <begin position="229"/>
        <end position="241"/>
    </location>
</feature>
<feature type="disulfide bond" evidence="2 5">
    <location>
        <begin position="236"/>
        <end position="254"/>
    </location>
</feature>
<feature type="disulfide bond" evidence="2 5">
    <location>
        <begin position="248"/>
        <end position="265"/>
    </location>
</feature>
<feature type="disulfide bond" evidence="2 5">
    <location>
        <begin position="457"/>
        <end position="468"/>
    </location>
</feature>
<feature type="disulfide bond" evidence="2 5">
    <location>
        <begin position="464"/>
        <end position="481"/>
    </location>
</feature>
<feature type="disulfide bond" evidence="2 5">
    <location>
        <begin position="475"/>
        <end position="490"/>
    </location>
</feature>
<feature type="splice variant" id="VSP_052395" description="In isoform 2." evidence="12">
    <location>
        <begin position="573"/>
        <end position="651"/>
    </location>
</feature>
<feature type="splice variant" id="VSP_026431" description="In isoform 3." evidence="13">
    <original>VFEAVAAGVAHSYVALDDL</original>
    <variation>SAGWGAPPPPPPPRAAWTR</variation>
    <location>
        <begin position="942"/>
        <end position="960"/>
    </location>
</feature>
<feature type="splice variant" id="VSP_026432" description="In isoform 3." evidence="13">
    <location>
        <begin position="961"/>
        <end position="1216"/>
    </location>
</feature>
<feature type="sequence variant" id="VAR_035778" description="In a breast cancer sample; somatic mutation; dbSNP:rs755530502." evidence="10">
    <original>P</original>
    <variation>T</variation>
    <location>
        <position position="244"/>
    </location>
</feature>
<feature type="sequence variant" id="VAR_032128" description="In dbSNP:rs2275156." evidence="8 11">
    <original>W</original>
    <variation>G</variation>
    <location>
        <position position="987"/>
    </location>
</feature>
<feature type="sequence variant" id="VAR_035779" description="In a breast cancer sample; somatic mutation; dbSNP:rs138623341." evidence="10">
    <original>R</original>
    <variation>W</variation>
    <location>
        <position position="1174"/>
    </location>
</feature>
<accession>Q6UXC1</accession>
<accession>A2A3D4</accession>
<accession>B0QZ81</accession>
<accession>Q5T5S2</accession>
<accession>Q8NCX7</accession>
<keyword id="KW-0025">Alternative splicing</keyword>
<keyword id="KW-1015">Disulfide bond</keyword>
<keyword id="KW-0325">Glycoprotein</keyword>
<keyword id="KW-0472">Membrane</keyword>
<keyword id="KW-0653">Protein transport</keyword>
<keyword id="KW-1267">Proteomics identification</keyword>
<keyword id="KW-1185">Reference proteome</keyword>
<keyword id="KW-0677">Repeat</keyword>
<keyword id="KW-0732">Signal</keyword>
<keyword id="KW-0812">Transmembrane</keyword>
<keyword id="KW-1133">Transmembrane helix</keyword>
<keyword id="KW-0813">Transport</keyword>
<comment type="function">
    <text evidence="3">Probably involved in the sorting and selective transport of receptors and ligands across polarized epithelia.</text>
</comment>
<comment type="subcellular location">
    <subcellularLocation>
        <location evidence="1">Membrane</location>
        <topology evidence="1">Single-pass type I membrane protein</topology>
    </subcellularLocation>
</comment>
<comment type="alternative products">
    <event type="alternative splicing"/>
    <isoform>
        <id>Q6UXC1-1</id>
        <name evidence="9">1</name>
        <sequence type="displayed"/>
    </isoform>
    <isoform>
        <id>Q6UXC1-2</id>
        <name evidence="8">2</name>
        <sequence type="described" ref="VSP_052395"/>
    </isoform>
    <isoform>
        <id>Q6UXC1-3</id>
        <name>3</name>
        <sequence type="described" ref="VSP_026431 VSP_026432"/>
    </isoform>
</comment>
<comment type="miscellaneous">
    <molecule>Isoform 1</molecule>
    <text>Gene prediction based on similarity to rat ortholog.</text>
</comment>
<comment type="miscellaneous">
    <molecule>Isoform 3</molecule>
    <text evidence="14">May be due to intron retention.</text>
</comment>
<evidence type="ECO:0000250" key="1"/>
<evidence type="ECO:0000250" key="2">
    <source>
        <dbReference type="UniProtKB" id="P01130"/>
    </source>
</evidence>
<evidence type="ECO:0000250" key="3">
    <source>
        <dbReference type="UniProtKB" id="Q63191"/>
    </source>
</evidence>
<evidence type="ECO:0000255" key="4"/>
<evidence type="ECO:0000255" key="5">
    <source>
        <dbReference type="PROSITE-ProRule" id="PRU00124"/>
    </source>
</evidence>
<evidence type="ECO:0000255" key="6">
    <source>
        <dbReference type="PROSITE-ProRule" id="PRU00128"/>
    </source>
</evidence>
<evidence type="ECO:0000256" key="7">
    <source>
        <dbReference type="SAM" id="MobiDB-lite"/>
    </source>
</evidence>
<evidence type="ECO:0000269" key="8">
    <source>
    </source>
</evidence>
<evidence type="ECO:0000269" key="9">
    <source>
    </source>
</evidence>
<evidence type="ECO:0000269" key="10">
    <source>
    </source>
</evidence>
<evidence type="ECO:0000269" key="11">
    <source>
    </source>
</evidence>
<evidence type="ECO:0000303" key="12">
    <source>
    </source>
</evidence>
<evidence type="ECO:0000303" key="13">
    <source>
    </source>
</evidence>
<evidence type="ECO:0000305" key="14"/>
<evidence type="ECO:0000312" key="15">
    <source>
        <dbReference type="EMBL" id="AAQ88785.1"/>
    </source>
</evidence>
<evidence type="ECO:0000312" key="16">
    <source>
        <dbReference type="HGNC" id="HGNC:24083"/>
    </source>
</evidence>
<organism>
    <name type="scientific">Homo sapiens</name>
    <name type="common">Human</name>
    <dbReference type="NCBI Taxonomy" id="9606"/>
    <lineage>
        <taxon>Eukaryota</taxon>
        <taxon>Metazoa</taxon>
        <taxon>Chordata</taxon>
        <taxon>Craniata</taxon>
        <taxon>Vertebrata</taxon>
        <taxon>Euteleostomi</taxon>
        <taxon>Mammalia</taxon>
        <taxon>Eutheria</taxon>
        <taxon>Euarchontoglires</taxon>
        <taxon>Primates</taxon>
        <taxon>Haplorrhini</taxon>
        <taxon>Catarrhini</taxon>
        <taxon>Hominidae</taxon>
        <taxon>Homo</taxon>
    </lineage>
</organism>